<name>RIR1_ECOLI</name>
<dbReference type="EC" id="1.17.4.1"/>
<dbReference type="EMBL" id="K02672">
    <property type="protein sequence ID" value="AAA24223.1"/>
    <property type="status" value="ALT_SEQ"/>
    <property type="molecule type" value="Genomic_DNA"/>
</dbReference>
<dbReference type="EMBL" id="X06999">
    <property type="protein sequence ID" value="CAA30056.2"/>
    <property type="molecule type" value="Genomic_DNA"/>
</dbReference>
<dbReference type="EMBL" id="U00096">
    <property type="protein sequence ID" value="AAC75294.1"/>
    <property type="molecule type" value="Genomic_DNA"/>
</dbReference>
<dbReference type="EMBL" id="AP009048">
    <property type="protein sequence ID" value="BAA16053.1"/>
    <property type="molecule type" value="Genomic_DNA"/>
</dbReference>
<dbReference type="PIR" id="H64993">
    <property type="entry name" value="RDEC1R"/>
</dbReference>
<dbReference type="RefSeq" id="NP_416737.1">
    <property type="nucleotide sequence ID" value="NC_000913.3"/>
</dbReference>
<dbReference type="RefSeq" id="WP_001075164.1">
    <property type="nucleotide sequence ID" value="NZ_STEB01000002.1"/>
</dbReference>
<dbReference type="PDB" id="1QFN">
    <property type="method" value="NMR"/>
    <property type="chains" value="B=737-761"/>
</dbReference>
<dbReference type="PDB" id="1R1R">
    <property type="method" value="X-ray"/>
    <property type="resolution" value="2.90 A"/>
    <property type="chains" value="A/B/C=1-761"/>
</dbReference>
<dbReference type="PDB" id="1RLR">
    <property type="method" value="X-ray"/>
    <property type="resolution" value="2.50 A"/>
    <property type="chains" value="A=1-761"/>
</dbReference>
<dbReference type="PDB" id="2R1R">
    <property type="method" value="X-ray"/>
    <property type="resolution" value="3.00 A"/>
    <property type="chains" value="A/B/C=1-761"/>
</dbReference>
<dbReference type="PDB" id="2X0X">
    <property type="method" value="X-ray"/>
    <property type="resolution" value="2.30 A"/>
    <property type="chains" value="A/B/C=1-761"/>
</dbReference>
<dbReference type="PDB" id="2XAK">
    <property type="method" value="X-ray"/>
    <property type="resolution" value="2.80 A"/>
    <property type="chains" value="A/B/C=1-761"/>
</dbReference>
<dbReference type="PDB" id="2XAP">
    <property type="method" value="X-ray"/>
    <property type="resolution" value="2.10 A"/>
    <property type="chains" value="A/B/C=1-761"/>
</dbReference>
<dbReference type="PDB" id="2XAV">
    <property type="method" value="X-ray"/>
    <property type="resolution" value="2.80 A"/>
    <property type="chains" value="A/B/C=1-761"/>
</dbReference>
<dbReference type="PDB" id="2XAW">
    <property type="method" value="X-ray"/>
    <property type="resolution" value="3.10 A"/>
    <property type="chains" value="A/B/C=1-761"/>
</dbReference>
<dbReference type="PDB" id="2XAX">
    <property type="method" value="X-ray"/>
    <property type="resolution" value="2.75 A"/>
    <property type="chains" value="A/B/C=1-761"/>
</dbReference>
<dbReference type="PDB" id="2XAY">
    <property type="method" value="X-ray"/>
    <property type="resolution" value="2.65 A"/>
    <property type="chains" value="A/B/C=1-761"/>
</dbReference>
<dbReference type="PDB" id="2XAZ">
    <property type="method" value="X-ray"/>
    <property type="resolution" value="2.60 A"/>
    <property type="chains" value="A/B/C=1-761"/>
</dbReference>
<dbReference type="PDB" id="2XO4">
    <property type="method" value="X-ray"/>
    <property type="resolution" value="2.50 A"/>
    <property type="chains" value="A/B/C=1-761"/>
</dbReference>
<dbReference type="PDB" id="2XO5">
    <property type="method" value="X-ray"/>
    <property type="resolution" value="2.70 A"/>
    <property type="chains" value="A/B/C=1-761"/>
</dbReference>
<dbReference type="PDB" id="3R1R">
    <property type="method" value="X-ray"/>
    <property type="resolution" value="3.00 A"/>
    <property type="chains" value="A/B/C=1-761"/>
</dbReference>
<dbReference type="PDB" id="3UUS">
    <property type="method" value="X-ray"/>
    <property type="resolution" value="5.65 A"/>
    <property type="chains" value="A/B/C/D=1-761"/>
</dbReference>
<dbReference type="PDB" id="4ERM">
    <property type="method" value="X-ray"/>
    <property type="resolution" value="3.95 A"/>
    <property type="chains" value="A/B/C/D=1-761"/>
</dbReference>
<dbReference type="PDB" id="4ERP">
    <property type="method" value="X-ray"/>
    <property type="resolution" value="4.45 A"/>
    <property type="chains" value="A/B/C/D=1-761"/>
</dbReference>
<dbReference type="PDB" id="4R1R">
    <property type="method" value="X-ray"/>
    <property type="resolution" value="3.20 A"/>
    <property type="chains" value="A/B/C=1-761"/>
</dbReference>
<dbReference type="PDB" id="5CNS">
    <property type="method" value="X-ray"/>
    <property type="resolution" value="2.98 A"/>
    <property type="chains" value="A/B/C/D=1-761"/>
</dbReference>
<dbReference type="PDB" id="5CNT">
    <property type="method" value="X-ray"/>
    <property type="resolution" value="3.25 A"/>
    <property type="chains" value="A/B/C/D=1-761"/>
</dbReference>
<dbReference type="PDB" id="5CNU">
    <property type="method" value="X-ray"/>
    <property type="resolution" value="3.40 A"/>
    <property type="chains" value="A/B/C/D=1-761"/>
</dbReference>
<dbReference type="PDB" id="5CNV">
    <property type="method" value="X-ray"/>
    <property type="resolution" value="3.20 A"/>
    <property type="chains" value="A/B/C/D=1-761"/>
</dbReference>
<dbReference type="PDB" id="5R1R">
    <property type="method" value="X-ray"/>
    <property type="resolution" value="3.10 A"/>
    <property type="chains" value="A/B/C=1-761"/>
</dbReference>
<dbReference type="PDB" id="6R1R">
    <property type="method" value="X-ray"/>
    <property type="resolution" value="3.10 A"/>
    <property type="chains" value="A/B/C=1-761"/>
</dbReference>
<dbReference type="PDB" id="6W4X">
    <property type="method" value="EM"/>
    <property type="resolution" value="3.60 A"/>
    <property type="chains" value="A/B=1-761"/>
</dbReference>
<dbReference type="PDB" id="7R1R">
    <property type="method" value="X-ray"/>
    <property type="resolution" value="3.10 A"/>
    <property type="chains" value="A/B/C=1-761"/>
</dbReference>
<dbReference type="PDB" id="8VHN">
    <property type="method" value="X-ray"/>
    <property type="resolution" value="2.62 A"/>
    <property type="chains" value="A/B=1-761"/>
</dbReference>
<dbReference type="PDB" id="8VHO">
    <property type="method" value="X-ray"/>
    <property type="resolution" value="2.55 A"/>
    <property type="chains" value="A/B=1-761"/>
</dbReference>
<dbReference type="PDB" id="8VHP">
    <property type="method" value="X-ray"/>
    <property type="resolution" value="2.61 A"/>
    <property type="chains" value="A/B/C/D/E/F/G/H=1-760"/>
</dbReference>
<dbReference type="PDB" id="8VHQ">
    <property type="method" value="X-ray"/>
    <property type="resolution" value="3.40 A"/>
    <property type="chains" value="A/B/C/D=1-760"/>
</dbReference>
<dbReference type="PDB" id="8VHR">
    <property type="method" value="X-ray"/>
    <property type="resolution" value="3.55 A"/>
    <property type="chains" value="A/B/C/D=1-760"/>
</dbReference>
<dbReference type="PDB" id="8VHU">
    <property type="method" value="X-ray"/>
    <property type="resolution" value="2.10 A"/>
    <property type="chains" value="A/B=1-734"/>
</dbReference>
<dbReference type="PDB" id="9DB2">
    <property type="method" value="EM"/>
    <property type="resolution" value="2.60 A"/>
    <property type="chains" value="A/B=1-761"/>
</dbReference>
<dbReference type="PDBsum" id="1QFN"/>
<dbReference type="PDBsum" id="1R1R"/>
<dbReference type="PDBsum" id="1RLR"/>
<dbReference type="PDBsum" id="2R1R"/>
<dbReference type="PDBsum" id="2X0X"/>
<dbReference type="PDBsum" id="2XAK"/>
<dbReference type="PDBsum" id="2XAP"/>
<dbReference type="PDBsum" id="2XAV"/>
<dbReference type="PDBsum" id="2XAW"/>
<dbReference type="PDBsum" id="2XAX"/>
<dbReference type="PDBsum" id="2XAY"/>
<dbReference type="PDBsum" id="2XAZ"/>
<dbReference type="PDBsum" id="2XO4"/>
<dbReference type="PDBsum" id="2XO5"/>
<dbReference type="PDBsum" id="3R1R"/>
<dbReference type="PDBsum" id="3UUS"/>
<dbReference type="PDBsum" id="4ERM"/>
<dbReference type="PDBsum" id="4ERP"/>
<dbReference type="PDBsum" id="4R1R"/>
<dbReference type="PDBsum" id="5CNS"/>
<dbReference type="PDBsum" id="5CNT"/>
<dbReference type="PDBsum" id="5CNU"/>
<dbReference type="PDBsum" id="5CNV"/>
<dbReference type="PDBsum" id="5R1R"/>
<dbReference type="PDBsum" id="6R1R"/>
<dbReference type="PDBsum" id="6W4X"/>
<dbReference type="PDBsum" id="7R1R"/>
<dbReference type="PDBsum" id="8VHN"/>
<dbReference type="PDBsum" id="8VHO"/>
<dbReference type="PDBsum" id="8VHP"/>
<dbReference type="PDBsum" id="8VHQ"/>
<dbReference type="PDBsum" id="8VHR"/>
<dbReference type="PDBsum" id="8VHU"/>
<dbReference type="PDBsum" id="9DB2"/>
<dbReference type="EMDB" id="EMD-21540"/>
<dbReference type="EMDB" id="EMD-46711"/>
<dbReference type="SMR" id="P00452"/>
<dbReference type="BioGRID" id="4262130">
    <property type="interactions" value="188"/>
</dbReference>
<dbReference type="BioGRID" id="850958">
    <property type="interactions" value="1"/>
</dbReference>
<dbReference type="ComplexPortal" id="CPX-1075">
    <property type="entry name" value="Ribonucleoside-diphosphate reductase 1 complex"/>
</dbReference>
<dbReference type="DIP" id="DIP-584N"/>
<dbReference type="FunCoup" id="P00452">
    <property type="interactions" value="702"/>
</dbReference>
<dbReference type="IntAct" id="P00452">
    <property type="interactions" value="10"/>
</dbReference>
<dbReference type="STRING" id="511145.b2234"/>
<dbReference type="iPTMnet" id="P00452"/>
<dbReference type="jPOST" id="P00452"/>
<dbReference type="PaxDb" id="511145-b2234"/>
<dbReference type="EnsemblBacteria" id="AAC75294">
    <property type="protein sequence ID" value="AAC75294"/>
    <property type="gene ID" value="b2234"/>
</dbReference>
<dbReference type="GeneID" id="93774941"/>
<dbReference type="GeneID" id="946612"/>
<dbReference type="KEGG" id="ecj:JW2228"/>
<dbReference type="KEGG" id="eco:b2234"/>
<dbReference type="KEGG" id="ecoc:C3026_12485"/>
<dbReference type="PATRIC" id="fig|1411691.4.peg.1"/>
<dbReference type="EchoBASE" id="EB0654"/>
<dbReference type="eggNOG" id="COG0209">
    <property type="taxonomic scope" value="Bacteria"/>
</dbReference>
<dbReference type="HOGENOM" id="CLU_000404_3_0_6"/>
<dbReference type="InParanoid" id="P00452"/>
<dbReference type="OMA" id="IELPQHM"/>
<dbReference type="OrthoDB" id="9762933at2"/>
<dbReference type="PhylomeDB" id="P00452"/>
<dbReference type="BioCyc" id="EcoCyc:NRDA-MONOMER"/>
<dbReference type="BioCyc" id="MetaCyc:NRDA-MONOMER"/>
<dbReference type="BRENDA" id="1.17.4.1">
    <property type="organism ID" value="2026"/>
</dbReference>
<dbReference type="SABIO-RK" id="P00452"/>
<dbReference type="EvolutionaryTrace" id="P00452"/>
<dbReference type="PRO" id="PR:P00452"/>
<dbReference type="Proteomes" id="UP000000625">
    <property type="component" value="Chromosome"/>
</dbReference>
<dbReference type="GO" id="GO:0005829">
    <property type="term" value="C:cytosol"/>
    <property type="evidence" value="ECO:0000314"/>
    <property type="project" value="EcoCyc"/>
</dbReference>
<dbReference type="GO" id="GO:0005971">
    <property type="term" value="C:ribonucleoside-diphosphate reductase complex"/>
    <property type="evidence" value="ECO:0000314"/>
    <property type="project" value="EcoliWiki"/>
</dbReference>
<dbReference type="GO" id="GO:0005524">
    <property type="term" value="F:ATP binding"/>
    <property type="evidence" value="ECO:0000314"/>
    <property type="project" value="EcoliWiki"/>
</dbReference>
<dbReference type="GO" id="GO:0042802">
    <property type="term" value="F:identical protein binding"/>
    <property type="evidence" value="ECO:0000353"/>
    <property type="project" value="IntAct"/>
</dbReference>
<dbReference type="GO" id="GO:0044183">
    <property type="term" value="F:protein folding chaperone"/>
    <property type="evidence" value="ECO:0000269"/>
    <property type="project" value="DisProt"/>
</dbReference>
<dbReference type="GO" id="GO:0004748">
    <property type="term" value="F:ribonucleoside-diphosphate reductase activity, thioredoxin disulfide as acceptor"/>
    <property type="evidence" value="ECO:0000314"/>
    <property type="project" value="EcoCyc"/>
</dbReference>
<dbReference type="GO" id="GO:0009265">
    <property type="term" value="P:2'-deoxyribonucleotide biosynthetic process"/>
    <property type="evidence" value="ECO:0000314"/>
    <property type="project" value="ComplexPortal"/>
</dbReference>
<dbReference type="GO" id="GO:0009263">
    <property type="term" value="P:deoxyribonucleotide biosynthetic process"/>
    <property type="evidence" value="ECO:0000314"/>
    <property type="project" value="EcoliWiki"/>
</dbReference>
<dbReference type="GO" id="GO:0015949">
    <property type="term" value="P:nucleobase-containing small molecule interconversion"/>
    <property type="evidence" value="ECO:0000314"/>
    <property type="project" value="EcoliWiki"/>
</dbReference>
<dbReference type="GO" id="GO:0009185">
    <property type="term" value="P:ribonucleoside diphosphate metabolic process"/>
    <property type="evidence" value="ECO:0000314"/>
    <property type="project" value="ComplexPortal"/>
</dbReference>
<dbReference type="CDD" id="cd01679">
    <property type="entry name" value="RNR_I"/>
    <property type="match status" value="1"/>
</dbReference>
<dbReference type="DisProt" id="DP02715"/>
<dbReference type="FunFam" id="1.10.1650.20:FF:000001">
    <property type="entry name" value="Ribonucleoside-diphosphate reductase"/>
    <property type="match status" value="1"/>
</dbReference>
<dbReference type="Gene3D" id="1.10.1650.20">
    <property type="match status" value="1"/>
</dbReference>
<dbReference type="Gene3D" id="3.20.70.20">
    <property type="match status" value="1"/>
</dbReference>
<dbReference type="InterPro" id="IPR005144">
    <property type="entry name" value="ATP-cone_dom"/>
</dbReference>
<dbReference type="InterPro" id="IPR013346">
    <property type="entry name" value="NrdE_NrdA_C"/>
</dbReference>
<dbReference type="InterPro" id="IPR000788">
    <property type="entry name" value="RNR_lg_C"/>
</dbReference>
<dbReference type="InterPro" id="IPR013509">
    <property type="entry name" value="RNR_lsu_N"/>
</dbReference>
<dbReference type="InterPro" id="IPR008926">
    <property type="entry name" value="RNR_R1-su_N"/>
</dbReference>
<dbReference type="InterPro" id="IPR039718">
    <property type="entry name" value="Rrm1"/>
</dbReference>
<dbReference type="NCBIfam" id="TIGR02506">
    <property type="entry name" value="NrdE_NrdA"/>
    <property type="match status" value="1"/>
</dbReference>
<dbReference type="NCBIfam" id="NF006578">
    <property type="entry name" value="PRK09103.1"/>
    <property type="match status" value="1"/>
</dbReference>
<dbReference type="PANTHER" id="PTHR11573">
    <property type="entry name" value="RIBONUCLEOSIDE-DIPHOSPHATE REDUCTASE LARGE CHAIN"/>
    <property type="match status" value="1"/>
</dbReference>
<dbReference type="PANTHER" id="PTHR11573:SF6">
    <property type="entry name" value="RIBONUCLEOSIDE-DIPHOSPHATE REDUCTASE LARGE SUBUNIT"/>
    <property type="match status" value="1"/>
</dbReference>
<dbReference type="Pfam" id="PF03477">
    <property type="entry name" value="ATP-cone"/>
    <property type="match status" value="1"/>
</dbReference>
<dbReference type="Pfam" id="PF02867">
    <property type="entry name" value="Ribonuc_red_lgC"/>
    <property type="match status" value="1"/>
</dbReference>
<dbReference type="Pfam" id="PF00317">
    <property type="entry name" value="Ribonuc_red_lgN"/>
    <property type="match status" value="1"/>
</dbReference>
<dbReference type="PRINTS" id="PR01183">
    <property type="entry name" value="RIBORDTASEM1"/>
</dbReference>
<dbReference type="SUPFAM" id="SSF51998">
    <property type="entry name" value="PFL-like glycyl radical enzymes"/>
    <property type="match status" value="1"/>
</dbReference>
<dbReference type="SUPFAM" id="SSF48168">
    <property type="entry name" value="R1 subunit of ribonucleotide reductase, N-terminal domain"/>
    <property type="match status" value="1"/>
</dbReference>
<dbReference type="PROSITE" id="PS51161">
    <property type="entry name" value="ATP_CONE"/>
    <property type="match status" value="1"/>
</dbReference>
<dbReference type="PROSITE" id="PS00089">
    <property type="entry name" value="RIBORED_LARGE"/>
    <property type="match status" value="1"/>
</dbReference>
<protein>
    <recommendedName>
        <fullName>Ribonucleoside-diphosphate reductase 1 subunit alpha</fullName>
        <ecNumber>1.17.4.1</ecNumber>
    </recommendedName>
    <alternativeName>
        <fullName>Protein B1</fullName>
    </alternativeName>
    <alternativeName>
        <fullName>Ribonucleoside-diphosphate reductase 1 R1 subunit</fullName>
    </alternativeName>
    <alternativeName>
        <fullName>Ribonucleotide reductase 1</fullName>
    </alternativeName>
</protein>
<comment type="function">
    <text>Provides the precursors necessary for DNA synthesis. Catalyzes the biosynthesis of deoxyribonucleotides from the corresponding ribonucleotides. R1 contains the binding sites for both substrates and allosteric effectors and carries out the actual reduction of the ribonucleotide. It also provides redox-active cysteines.</text>
</comment>
<comment type="catalytic activity">
    <reaction>
        <text>a 2'-deoxyribonucleoside 5'-diphosphate + [thioredoxin]-disulfide + H2O = a ribonucleoside 5'-diphosphate + [thioredoxin]-dithiol</text>
        <dbReference type="Rhea" id="RHEA:23252"/>
        <dbReference type="Rhea" id="RHEA-COMP:10698"/>
        <dbReference type="Rhea" id="RHEA-COMP:10700"/>
        <dbReference type="ChEBI" id="CHEBI:15377"/>
        <dbReference type="ChEBI" id="CHEBI:29950"/>
        <dbReference type="ChEBI" id="CHEBI:50058"/>
        <dbReference type="ChEBI" id="CHEBI:57930"/>
        <dbReference type="ChEBI" id="CHEBI:73316"/>
        <dbReference type="EC" id="1.17.4.1"/>
    </reaction>
</comment>
<comment type="activity regulation">
    <text evidence="5 6 8">Under complex allosteric control mediated by deoxynucleoside triphosphates and ATP binding to separate specificity and activation sites on the alpha subunit. The type of nucleotide bound at the specificity site determines substrate preference. It seems probable that ATP makes the enzyme reduce CDP and UDP, dGTP favors ADP reduction and dTTP favors GDP reduction. Stimulated by ATP and inhibited by dATP binding to the activity site. In vitro, its activity is increased by dithiothreitol (DTT) or thioredoxins (non-specific). Inhibited by hydroxyurea, leads to dNTP depletion, replication fork arrest and genomic instability (PubMed:20005847).</text>
</comment>
<comment type="subunit">
    <text evidence="5 6">Tetramer of two alpha (R1) and two beta (R2) subunits. The B1 protein is a dimer of alpha subunits. A radical transfer pathway occurs between 'Tyr-122' of R2 and R1.</text>
</comment>
<comment type="interaction">
    <interactant intactId="EBI-370018">
        <id>P00452</id>
    </interactant>
    <interactant intactId="EBI-370018">
        <id>P00452</id>
        <label>nrdA</label>
    </interactant>
    <organismsDiffer>false</organismsDiffer>
    <experiments>3</experiments>
</comment>
<comment type="interaction">
    <interactant intactId="EBI-370018">
        <id>P00452</id>
    </interactant>
    <interactant intactId="EBI-555196">
        <id>P69924</id>
        <label>nrdB</label>
    </interactant>
    <organismsDiffer>false</organismsDiffer>
    <experiments>11</experiments>
</comment>
<comment type="alternative products">
    <event type="alternative initiation"/>
    <isoform>
        <id>P00452-1</id>
        <name>Alpha</name>
        <sequence type="displayed"/>
    </isoform>
    <isoform>
        <id>P00452-2</id>
        <name>Alpha'</name>
        <sequence type="described" ref="VSP_018871 VSP_018872"/>
    </isoform>
</comment>
<comment type="induction">
    <text evidence="3">Induced 5-fold by hydroxyurea (at protein level).</text>
</comment>
<comment type="PTM">
    <text>Binding of the substrate occurs primarily when the active-site cysteines are reduced.</text>
</comment>
<comment type="miscellaneous">
    <text>E.coli produces two separate class I enzymes. This one is the functional enzyme during growth.</text>
</comment>
<comment type="miscellaneous">
    <text>Two distinct regulatory sites have been defined: one controls substrate specificity and the other regulates the overall catalytic activity. A substrate-binding catalytic site, located on R1, is formed only in the presence of the second subunit R2.</text>
</comment>
<comment type="similarity">
    <text evidence="7">Belongs to the ribonucleoside diphosphate reductase large chain family.</text>
</comment>
<comment type="sequence caution" evidence="7">
    <conflict type="miscellaneous discrepancy">
        <sequence resource="EMBL-CDS" id="AAA24223"/>
    </conflict>
</comment>
<organism>
    <name type="scientific">Escherichia coli (strain K12)</name>
    <dbReference type="NCBI Taxonomy" id="83333"/>
    <lineage>
        <taxon>Bacteria</taxon>
        <taxon>Pseudomonadati</taxon>
        <taxon>Pseudomonadota</taxon>
        <taxon>Gammaproteobacteria</taxon>
        <taxon>Enterobacterales</taxon>
        <taxon>Enterobacteriaceae</taxon>
        <taxon>Escherichia</taxon>
    </lineage>
</organism>
<feature type="chain" id="PRO_0000030596" description="Ribonucleoside-diphosphate reductase 1 subunit alpha">
    <location>
        <begin position="1"/>
        <end position="761"/>
    </location>
</feature>
<feature type="domain" description="ATP-cone" evidence="1">
    <location>
        <begin position="5"/>
        <end position="95"/>
    </location>
</feature>
<feature type="active site" description="Proton acceptor">
    <location>
        <position position="437"/>
    </location>
</feature>
<feature type="active site" description="Cysteine radical intermediate">
    <location>
        <position position="439"/>
    </location>
</feature>
<feature type="active site" description="Proton acceptor">
    <location>
        <position position="441"/>
    </location>
</feature>
<feature type="binding site" evidence="5 11">
    <location>
        <position position="9"/>
    </location>
    <ligand>
        <name>ATP</name>
        <dbReference type="ChEBI" id="CHEBI:30616"/>
        <note>allosteric activator</note>
    </ligand>
</feature>
<feature type="binding site" evidence="5 11">
    <location>
        <begin position="15"/>
        <end position="21"/>
    </location>
    <ligand>
        <name>ATP</name>
        <dbReference type="ChEBI" id="CHEBI:30616"/>
        <note>allosteric activator</note>
    </ligand>
</feature>
<feature type="binding site" evidence="5 11">
    <location>
        <position position="55"/>
    </location>
    <ligand>
        <name>ATP</name>
        <dbReference type="ChEBI" id="CHEBI:30616"/>
        <note>allosteric activator</note>
    </ligand>
</feature>
<feature type="binding site" evidence="5 11">
    <location>
        <position position="91"/>
    </location>
    <ligand>
        <name>ATP</name>
        <dbReference type="ChEBI" id="CHEBI:30616"/>
        <note>allosteric activator</note>
    </ligand>
</feature>
<feature type="binding site" evidence="5 12">
    <location>
        <position position="209"/>
    </location>
    <ligand>
        <name>GDP</name>
        <dbReference type="ChEBI" id="CHEBI:58189"/>
    </ligand>
</feature>
<feature type="binding site" evidence="5 12">
    <location>
        <begin position="232"/>
        <end position="234"/>
    </location>
    <ligand>
        <name>dTTP</name>
        <dbReference type="ChEBI" id="CHEBI:37568"/>
        <note>allosteric effector that controls substrate specificity</note>
    </ligand>
</feature>
<feature type="binding site" evidence="5 12">
    <location>
        <position position="262"/>
    </location>
    <ligand>
        <name>dTTP</name>
        <dbReference type="ChEBI" id="CHEBI:37568"/>
        <note>allosteric effector that controls substrate specificity</note>
    </ligand>
</feature>
<feature type="binding site" evidence="5 12">
    <location>
        <position position="269"/>
    </location>
    <ligand>
        <name>dTTP</name>
        <dbReference type="ChEBI" id="CHEBI:37568"/>
        <note>allosteric effector that controls substrate specificity</note>
    </ligand>
</feature>
<feature type="binding site" evidence="5 12">
    <location>
        <position position="437"/>
    </location>
    <ligand>
        <name>GDP</name>
        <dbReference type="ChEBI" id="CHEBI:58189"/>
    </ligand>
</feature>
<feature type="binding site" evidence="5 12">
    <location>
        <position position="441"/>
    </location>
    <ligand>
        <name>GDP</name>
        <dbReference type="ChEBI" id="CHEBI:58189"/>
    </ligand>
</feature>
<feature type="binding site" evidence="5 12">
    <location>
        <begin position="623"/>
        <end position="625"/>
    </location>
    <ligand>
        <name>GDP</name>
        <dbReference type="ChEBI" id="CHEBI:58189"/>
    </ligand>
</feature>
<feature type="site" description="Important for hydrogen atom transfer">
    <location>
        <position position="225"/>
    </location>
</feature>
<feature type="site" description="Important for hydrogen atom transfer">
    <location>
        <position position="462"/>
    </location>
</feature>
<feature type="site" description="Important for electron transfer">
    <location>
        <position position="730"/>
    </location>
</feature>
<feature type="site" description="Important for electron transfer">
    <location>
        <position position="731"/>
    </location>
</feature>
<feature type="site" description="Interacts with thioredoxin/glutaredoxin">
    <location>
        <position position="754"/>
    </location>
</feature>
<feature type="site" description="Interacts with thioredoxin/glutaredoxin">
    <location>
        <position position="759"/>
    </location>
</feature>
<feature type="modified residue" description="N6-acetyllysine" evidence="2">
    <location>
        <position position="283"/>
    </location>
</feature>
<feature type="disulfide bond" description="Redox-active" evidence="5 6">
    <location>
        <begin position="225"/>
        <end position="462"/>
    </location>
</feature>
<feature type="splice variant" id="VSP_018871" description="In isoform Alpha'." evidence="7">
    <location>
        <begin position="1"/>
        <end position="25"/>
    </location>
</feature>
<feature type="splice variant" id="VSP_018872" description="In isoform Alpha'." evidence="7">
    <original>L</original>
    <variation>M</variation>
    <location>
        <position position="26"/>
    </location>
</feature>
<feature type="sequence variant" description="In 15% of the chains.">
    <location>
        <begin position="1"/>
        <end position="2"/>
    </location>
</feature>
<feature type="sequence variant" description="In 30% of the chains.">
    <location>
        <position position="1"/>
    </location>
</feature>
<feature type="mutagenesis site" description="Loss of activity." evidence="6">
    <original>E</original>
    <variation>A</variation>
    <variation>Q</variation>
    <location>
        <position position="441"/>
    </location>
</feature>
<feature type="mutagenesis site" description="Decrease in activity." evidence="6">
    <original>E</original>
    <variation>D</variation>
    <location>
        <position position="441"/>
    </location>
</feature>
<feature type="mutagenesis site" description="Loss of activity." evidence="4">
    <original>Y</original>
    <variation>F</variation>
    <location>
        <position position="730"/>
    </location>
</feature>
<feature type="mutagenesis site" description="Loss of activity." evidence="4">
    <original>Y</original>
    <variation>F</variation>
    <location>
        <position position="731"/>
    </location>
</feature>
<feature type="strand" evidence="15">
    <location>
        <begin position="6"/>
        <end position="8"/>
    </location>
</feature>
<feature type="strand" evidence="15">
    <location>
        <begin position="10"/>
        <end position="12"/>
    </location>
</feature>
<feature type="strand" evidence="15">
    <location>
        <begin position="14"/>
        <end position="16"/>
    </location>
</feature>
<feature type="helix" evidence="15">
    <location>
        <begin position="19"/>
        <end position="30"/>
    </location>
</feature>
<feature type="helix" evidence="15">
    <location>
        <begin position="38"/>
        <end position="46"/>
    </location>
</feature>
<feature type="helix" evidence="15">
    <location>
        <begin position="55"/>
        <end position="68"/>
    </location>
</feature>
<feature type="strand" evidence="15">
    <location>
        <begin position="72"/>
        <end position="74"/>
    </location>
</feature>
<feature type="helix" evidence="15">
    <location>
        <begin position="77"/>
        <end position="94"/>
    </location>
</feature>
<feature type="strand" evidence="15">
    <location>
        <begin position="95"/>
        <end position="98"/>
    </location>
</feature>
<feature type="helix" evidence="15">
    <location>
        <begin position="102"/>
        <end position="111"/>
    </location>
</feature>
<feature type="helix" evidence="15">
    <location>
        <begin position="118"/>
        <end position="122"/>
    </location>
</feature>
<feature type="helix" evidence="15">
    <location>
        <begin position="125"/>
        <end position="134"/>
    </location>
</feature>
<feature type="helix" evidence="15">
    <location>
        <begin position="137"/>
        <end position="142"/>
    </location>
</feature>
<feature type="helix" evidence="15">
    <location>
        <begin position="145"/>
        <end position="154"/>
    </location>
</feature>
<feature type="turn" evidence="15">
    <location>
        <begin position="160"/>
        <end position="162"/>
    </location>
</feature>
<feature type="helix" evidence="15">
    <location>
        <begin position="169"/>
        <end position="180"/>
    </location>
</feature>
<feature type="turn" evidence="15">
    <location>
        <begin position="181"/>
        <end position="183"/>
    </location>
</feature>
<feature type="turn" evidence="15">
    <location>
        <begin position="186"/>
        <end position="188"/>
    </location>
</feature>
<feature type="helix" evidence="15">
    <location>
        <begin position="189"/>
        <end position="201"/>
    </location>
</feature>
<feature type="strand" evidence="15">
    <location>
        <begin position="204"/>
        <end position="206"/>
    </location>
</feature>
<feature type="helix" evidence="15">
    <location>
        <begin position="209"/>
        <end position="214"/>
    </location>
</feature>
<feature type="strand" evidence="20">
    <location>
        <begin position="217"/>
        <end position="219"/>
    </location>
</feature>
<feature type="strand" evidence="15">
    <location>
        <begin position="225"/>
        <end position="229"/>
    </location>
</feature>
<feature type="helix" evidence="15">
    <location>
        <begin position="234"/>
        <end position="248"/>
    </location>
</feature>
<feature type="turn" evidence="15">
    <location>
        <begin position="249"/>
        <end position="251"/>
    </location>
</feature>
<feature type="strand" evidence="15">
    <location>
        <begin position="253"/>
        <end position="257"/>
    </location>
</feature>
<feature type="turn" evidence="21">
    <location>
        <begin position="269"/>
        <end position="272"/>
    </location>
</feature>
<feature type="helix" evidence="18">
    <location>
        <begin position="274"/>
        <end position="276"/>
    </location>
</feature>
<feature type="helix" evidence="15">
    <location>
        <begin position="278"/>
        <end position="289"/>
    </location>
</feature>
<feature type="turn" evidence="15">
    <location>
        <begin position="290"/>
        <end position="292"/>
    </location>
</feature>
<feature type="strand" evidence="15">
    <location>
        <begin position="296"/>
        <end position="299"/>
    </location>
</feature>
<feature type="strand" evidence="15">
    <location>
        <begin position="301"/>
        <end position="307"/>
    </location>
</feature>
<feature type="helix" evidence="15">
    <location>
        <begin position="313"/>
        <end position="317"/>
    </location>
</feature>
<feature type="turn" evidence="15">
    <location>
        <begin position="318"/>
        <end position="320"/>
    </location>
</feature>
<feature type="strand" evidence="15">
    <location>
        <begin position="322"/>
        <end position="324"/>
    </location>
</feature>
<feature type="helix" evidence="15">
    <location>
        <begin position="326"/>
        <end position="328"/>
    </location>
</feature>
<feature type="strand" evidence="15">
    <location>
        <begin position="333"/>
        <end position="339"/>
    </location>
</feature>
<feature type="helix" evidence="15">
    <location>
        <begin position="341"/>
        <end position="349"/>
    </location>
</feature>
<feature type="strand" evidence="15">
    <location>
        <begin position="352"/>
        <end position="356"/>
    </location>
</feature>
<feature type="helix" evidence="15">
    <location>
        <begin position="358"/>
        <end position="360"/>
    </location>
</feature>
<feature type="helix" evidence="15">
    <location>
        <begin position="364"/>
        <end position="370"/>
    </location>
</feature>
<feature type="helix" evidence="15">
    <location>
        <begin position="372"/>
        <end position="384"/>
    </location>
</feature>
<feature type="strand" evidence="19">
    <location>
        <begin position="386"/>
        <end position="388"/>
    </location>
</feature>
<feature type="strand" evidence="15">
    <location>
        <begin position="391"/>
        <end position="394"/>
    </location>
</feature>
<feature type="helix" evidence="15">
    <location>
        <begin position="395"/>
        <end position="409"/>
    </location>
</feature>
<feature type="strand" evidence="15">
    <location>
        <begin position="412"/>
        <end position="416"/>
    </location>
</feature>
<feature type="helix" evidence="15">
    <location>
        <begin position="419"/>
        <end position="422"/>
    </location>
</feature>
<feature type="strand" evidence="15">
    <location>
        <begin position="423"/>
        <end position="426"/>
    </location>
</feature>
<feature type="turn" evidence="15">
    <location>
        <begin position="428"/>
        <end position="430"/>
    </location>
</feature>
<feature type="strand" evidence="19">
    <location>
        <begin position="438"/>
        <end position="440"/>
    </location>
</feature>
<feature type="strand" evidence="15">
    <location>
        <begin position="463"/>
        <end position="468"/>
    </location>
</feature>
<feature type="turn" evidence="15">
    <location>
        <begin position="469"/>
        <end position="471"/>
    </location>
</feature>
<feature type="helix" evidence="15">
    <location>
        <begin position="475"/>
        <end position="477"/>
    </location>
</feature>
<feature type="helix" evidence="15">
    <location>
        <begin position="478"/>
        <end position="495"/>
    </location>
</feature>
<feature type="helix" evidence="15">
    <location>
        <begin position="501"/>
        <end position="510"/>
    </location>
</feature>
<feature type="strand" evidence="15">
    <location>
        <begin position="513"/>
        <end position="518"/>
    </location>
</feature>
<feature type="helix" evidence="15">
    <location>
        <begin position="520"/>
        <end position="526"/>
    </location>
</feature>
<feature type="strand" evidence="21">
    <location>
        <begin position="531"/>
        <end position="534"/>
    </location>
</feature>
<feature type="helix" evidence="15">
    <location>
        <begin position="537"/>
        <end position="562"/>
    </location>
</feature>
<feature type="helix" evidence="15">
    <location>
        <begin position="568"/>
        <end position="570"/>
    </location>
</feature>
<feature type="helix" evidence="15">
    <location>
        <begin position="573"/>
        <end position="575"/>
    </location>
</feature>
<feature type="helix" evidence="15">
    <location>
        <begin position="579"/>
        <end position="582"/>
    </location>
</feature>
<feature type="helix" evidence="15">
    <location>
        <begin position="585"/>
        <end position="589"/>
    </location>
</feature>
<feature type="helix" evidence="15">
    <location>
        <begin position="599"/>
        <end position="609"/>
    </location>
</feature>
<feature type="strand" evidence="16">
    <location>
        <begin position="612"/>
        <end position="614"/>
    </location>
</feature>
<feature type="helix" evidence="15">
    <location>
        <begin position="624"/>
        <end position="628"/>
    </location>
</feature>
<feature type="strand" evidence="15">
    <location>
        <begin position="639"/>
        <end position="645"/>
    </location>
</feature>
<feature type="strand" evidence="17">
    <location>
        <begin position="648"/>
        <end position="650"/>
    </location>
</feature>
<feature type="strand" evidence="15">
    <location>
        <begin position="652"/>
        <end position="655"/>
    </location>
</feature>
<feature type="helix" evidence="15">
    <location>
        <begin position="659"/>
        <end position="662"/>
    </location>
</feature>
<feature type="turn" evidence="15">
    <location>
        <begin position="663"/>
        <end position="665"/>
    </location>
</feature>
<feature type="helix" evidence="15">
    <location>
        <begin position="669"/>
        <end position="671"/>
    </location>
</feature>
<feature type="strand" evidence="14">
    <location>
        <begin position="672"/>
        <end position="675"/>
    </location>
</feature>
<feature type="helix" evidence="15">
    <location>
        <begin position="676"/>
        <end position="686"/>
    </location>
</feature>
<feature type="strand" evidence="15">
    <location>
        <begin position="697"/>
        <end position="699"/>
    </location>
</feature>
<feature type="helix" evidence="15">
    <location>
        <begin position="701"/>
        <end position="703"/>
    </location>
</feature>
<feature type="helix" evidence="15">
    <location>
        <begin position="705"/>
        <end position="707"/>
    </location>
</feature>
<feature type="helix" evidence="15">
    <location>
        <begin position="711"/>
        <end position="723"/>
    </location>
</feature>
<feature type="strand" evidence="15">
    <location>
        <begin position="732"/>
        <end position="734"/>
    </location>
</feature>
<feature type="helix" evidence="13">
    <location>
        <begin position="738"/>
        <end position="741"/>
    </location>
</feature>
<evidence type="ECO:0000255" key="1">
    <source>
        <dbReference type="PROSITE-ProRule" id="PRU00492"/>
    </source>
</evidence>
<evidence type="ECO:0000269" key="2">
    <source>
    </source>
</evidence>
<evidence type="ECO:0000269" key="3">
    <source>
    </source>
</evidence>
<evidence type="ECO:0000269" key="4">
    <source>
    </source>
</evidence>
<evidence type="ECO:0000269" key="5">
    <source>
    </source>
</evidence>
<evidence type="ECO:0000269" key="6">
    <source>
    </source>
</evidence>
<evidence type="ECO:0000305" key="7"/>
<evidence type="ECO:0000305" key="8">
    <source>
    </source>
</evidence>
<evidence type="ECO:0007744" key="9">
    <source>
        <dbReference type="PDB" id="1R1R"/>
    </source>
</evidence>
<evidence type="ECO:0007744" key="10">
    <source>
        <dbReference type="PDB" id="2R1R"/>
    </source>
</evidence>
<evidence type="ECO:0007744" key="11">
    <source>
        <dbReference type="PDB" id="3R1R"/>
    </source>
</evidence>
<evidence type="ECO:0007744" key="12">
    <source>
        <dbReference type="PDB" id="4R1R"/>
    </source>
</evidence>
<evidence type="ECO:0007829" key="13">
    <source>
        <dbReference type="PDB" id="1RLR"/>
    </source>
</evidence>
<evidence type="ECO:0007829" key="14">
    <source>
        <dbReference type="PDB" id="2XAK"/>
    </source>
</evidence>
<evidence type="ECO:0007829" key="15">
    <source>
        <dbReference type="PDB" id="2XAP"/>
    </source>
</evidence>
<evidence type="ECO:0007829" key="16">
    <source>
        <dbReference type="PDB" id="2XO5"/>
    </source>
</evidence>
<evidence type="ECO:0007829" key="17">
    <source>
        <dbReference type="PDB" id="5CNS"/>
    </source>
</evidence>
<evidence type="ECO:0007829" key="18">
    <source>
        <dbReference type="PDB" id="5R1R"/>
    </source>
</evidence>
<evidence type="ECO:0007829" key="19">
    <source>
        <dbReference type="PDB" id="8VHO"/>
    </source>
</evidence>
<evidence type="ECO:0007829" key="20">
    <source>
        <dbReference type="PDB" id="8VHP"/>
    </source>
</evidence>
<evidence type="ECO:0007829" key="21">
    <source>
        <dbReference type="PDB" id="8VHU"/>
    </source>
</evidence>
<reference key="1">
    <citation type="journal article" date="1984" name="Proc. Natl. Acad. Sci. U.S.A.">
        <title>Primary structure of the Escherichia coli ribonucleoside diphosphate reductase operon.</title>
        <authorList>
            <person name="Carlson J."/>
            <person name="Fuchs J.A."/>
            <person name="Messing J."/>
        </authorList>
    </citation>
    <scope>NUCLEOTIDE SEQUENCE [GENOMIC DNA]</scope>
</reference>
<reference key="2">
    <citation type="journal article" date="1988" name="Nucleic Acids Res.">
        <title>Nucleotide sequence of the gene coding for the large subunit of ribonucleotide reductase of Escherichia coli. Correction.</title>
        <authorList>
            <person name="Nilsson O."/>
            <person name="Aaberg A."/>
            <person name="Lundqvist T."/>
            <person name="Sjoeberg B.-M."/>
        </authorList>
    </citation>
    <scope>NUCLEOTIDE SEQUENCE [GENOMIC DNA]</scope>
    <source>
        <strain>K12</strain>
    </source>
</reference>
<reference key="3">
    <citation type="submission" date="2004-04" db="EMBL/GenBank/DDBJ databases">
        <authorList>
            <person name="Sjoeberg B.-M."/>
        </authorList>
    </citation>
    <scope>SEQUENCE REVISION TO 526-527</scope>
</reference>
<reference key="4">
    <citation type="journal article" date="1997" name="DNA Res.">
        <title>Construction of a contiguous 874-kb sequence of the Escherichia coli-K12 genome corresponding to 50.0-68.8 min on the linkage map and analysis of its sequence features.</title>
        <authorList>
            <person name="Yamamoto Y."/>
            <person name="Aiba H."/>
            <person name="Baba T."/>
            <person name="Hayashi K."/>
            <person name="Inada T."/>
            <person name="Isono K."/>
            <person name="Itoh T."/>
            <person name="Kimura S."/>
            <person name="Kitagawa M."/>
            <person name="Makino K."/>
            <person name="Miki T."/>
            <person name="Mitsuhashi N."/>
            <person name="Mizobuchi K."/>
            <person name="Mori H."/>
            <person name="Nakade S."/>
            <person name="Nakamura Y."/>
            <person name="Nashimoto H."/>
            <person name="Oshima T."/>
            <person name="Oyama S."/>
            <person name="Saito N."/>
            <person name="Sampei G."/>
            <person name="Satoh Y."/>
            <person name="Sivasundaram S."/>
            <person name="Tagami H."/>
            <person name="Takahashi H."/>
            <person name="Takeda J."/>
            <person name="Takemoto K."/>
            <person name="Uehara K."/>
            <person name="Wada C."/>
            <person name="Yamagata S."/>
            <person name="Horiuchi T."/>
        </authorList>
    </citation>
    <scope>NUCLEOTIDE SEQUENCE [LARGE SCALE GENOMIC DNA]</scope>
    <source>
        <strain>K12 / W3110 / ATCC 27325 / DSM 5911</strain>
    </source>
</reference>
<reference key="5">
    <citation type="journal article" date="1997" name="Science">
        <title>The complete genome sequence of Escherichia coli K-12.</title>
        <authorList>
            <person name="Blattner F.R."/>
            <person name="Plunkett G. III"/>
            <person name="Bloch C.A."/>
            <person name="Perna N.T."/>
            <person name="Burland V."/>
            <person name="Riley M."/>
            <person name="Collado-Vides J."/>
            <person name="Glasner J.D."/>
            <person name="Rode C.K."/>
            <person name="Mayhew G.F."/>
            <person name="Gregor J."/>
            <person name="Davis N.W."/>
            <person name="Kirkpatrick H.A."/>
            <person name="Goeden M.A."/>
            <person name="Rose D.J."/>
            <person name="Mau B."/>
            <person name="Shao Y."/>
        </authorList>
    </citation>
    <scope>NUCLEOTIDE SEQUENCE [LARGE SCALE GENOMIC DNA]</scope>
    <source>
        <strain>K12 / MG1655 / ATCC 47076</strain>
    </source>
</reference>
<reference key="6">
    <citation type="journal article" date="2006" name="Mol. Syst. Biol.">
        <title>Highly accurate genome sequences of Escherichia coli K-12 strains MG1655 and W3110.</title>
        <authorList>
            <person name="Hayashi K."/>
            <person name="Morooka N."/>
            <person name="Yamamoto Y."/>
            <person name="Fujita K."/>
            <person name="Isono K."/>
            <person name="Choi S."/>
            <person name="Ohtsubo E."/>
            <person name="Baba T."/>
            <person name="Wanner B.L."/>
            <person name="Mori H."/>
            <person name="Horiuchi T."/>
        </authorList>
    </citation>
    <scope>NUCLEOTIDE SEQUENCE [LARGE SCALE GENOMIC DNA]</scope>
    <source>
        <strain>K12 / W3110 / ATCC 27325 / DSM 5911</strain>
    </source>
</reference>
<reference key="7">
    <citation type="journal article" date="1985" name="Eur. J. Biochem.">
        <title>Protein B1 of ribonucleotide reductase. Direct analytical data and comparisons with data indirectly deduced from the nucleotide sequence of the Escherichia coli nrdA gene.</title>
        <authorList>
            <person name="Sjoeberg B.-M."/>
            <person name="Eriksson S."/>
            <person name="Joernvall H."/>
            <person name="Carlquist M."/>
            <person name="Eklund H."/>
        </authorList>
    </citation>
    <scope>PARTIAL PROTEIN SEQUENCE</scope>
</reference>
<reference key="8">
    <citation type="journal article" date="1989" name="J. Biol. Chem.">
        <title>Evidence for two different classes of redox-active cysteines in ribonucleotide reductase of Escherichia coli.</title>
        <authorList>
            <person name="Aaberg A."/>
            <person name="Hahne S."/>
            <person name="Karlsson M."/>
            <person name="Larsson A."/>
            <person name="Ormoe M."/>
            <person name="Aahgren A."/>
            <person name="Sjoeberg B.-M."/>
        </authorList>
    </citation>
    <scope>ACTIVE SITES</scope>
</reference>
<reference key="9">
    <citation type="journal article" date="1996" name="J. Biol. Chem.">
        <title>Two conserved tyrosine residues in protein R1 participate in an intermolecular electron transfer in ribonucleotide reductase.</title>
        <authorList>
            <person name="Ekberg M."/>
            <person name="Sahlin M."/>
            <person name="Eriksson M."/>
            <person name="Sjoberg B.M."/>
        </authorList>
    </citation>
    <scope>ACTIVE SITES</scope>
    <scope>MUTAGENESIS OF TYR-730 AND TYR-731</scope>
</reference>
<reference key="10">
    <citation type="journal article" date="2009" name="Mol. Cell">
        <title>Hydroxyurea induces hydroxyl radical-mediated cell death in Escherichia coli.</title>
        <authorList>
            <person name="Davies B.W."/>
            <person name="Kohanski M.A."/>
            <person name="Simmons L.A."/>
            <person name="Winkler J.A."/>
            <person name="Collins J.J."/>
            <person name="Walker G.C."/>
        </authorList>
    </citation>
    <scope>ACTIVITY REGULATION</scope>
    <scope>INDUCTION BY HYDROXYUREA</scope>
    <source>
        <strain>K12 / MC4100 / ATCC 35695 / DSM 6574</strain>
    </source>
</reference>
<reference key="11">
    <citation type="journal article" date="2009" name="Mol. Cell. Proteomics">
        <title>Lysine acetylation is a highly abundant and evolutionarily conserved modification in Escherichia coli.</title>
        <authorList>
            <person name="Zhang J."/>
            <person name="Sprung R."/>
            <person name="Pei J."/>
            <person name="Tan X."/>
            <person name="Kim S."/>
            <person name="Zhu H."/>
            <person name="Liu C.F."/>
            <person name="Grishin N.V."/>
            <person name="Zhao Y."/>
        </authorList>
    </citation>
    <scope>ACETYLATION [LARGE SCALE ANALYSIS] AT LYS-283</scope>
    <scope>IDENTIFICATION BY MASS SPECTROMETRY</scope>
    <source>
        <strain>K12 / JW1106</strain>
        <strain>K12 / MG1655 / ATCC 47076</strain>
    </source>
</reference>
<reference key="12">
    <citation type="journal article" date="1994" name="Nature">
        <title>Structure of ribonucleotide reductase protein R1.</title>
        <authorList>
            <person name="Uhlin U."/>
            <person name="Eklund H."/>
        </authorList>
    </citation>
    <scope>X-RAY CRYSTALLOGRAPHY (2.5 ANGSTROMS)</scope>
</reference>
<reference key="13">
    <citation type="journal article" date="1997" name="J. Biol. Chem.">
        <title>A new mechanism-based radical intermediate in a mutant R1 protein affecting the catalytically essential Glu441 in Escherichia coli ribonucleotide reductase.</title>
        <authorList>
            <person name="Persson A.L."/>
            <person name="Eriksson M."/>
            <person name="Katterle B."/>
            <person name="Potsch S."/>
            <person name="Sahlin M."/>
            <person name="Sjoberg B.M."/>
        </authorList>
    </citation>
    <scope>X-RAY CRYSTALLOGRAPHY (3.1 ANGSTROMS) OF MUTANTS ALA-441; ASP-441 AND GLN-441</scope>
    <scope>DISULFIDE BOND</scope>
    <scope>SUBUNIT</scope>
    <scope>ACTIVE SITE</scope>
    <scope>ACTIVITY REGULATION</scope>
    <scope>ENZYME MECHANISM</scope>
    <scope>MUTAGENESIS OF GLU-441</scope>
</reference>
<reference evidence="9 10 11 12" key="14">
    <citation type="journal article" date="1997" name="Structure">
        <title>Binding of allosteric effectors to ribonucleotide reductase protein R1: reduction of active-site cysteines promotes substrate binding.</title>
        <authorList>
            <person name="Eriksson M."/>
            <person name="Uhlin U."/>
            <person name="Ramaswamy S."/>
            <person name="Ekberg M."/>
            <person name="Regnstroem K."/>
            <person name="Sjoeberg B.-M."/>
            <person name="Eklund H."/>
        </authorList>
    </citation>
    <scope>X-RAY CRYSTALLOGRAPHY (2.9 ANGSTROMS) IN COMPLEXES WITH ATP; GDP AND DTTP</scope>
    <scope>DISULFIDE BOND</scope>
    <scope>SUBUNIT</scope>
    <scope>ACTIVITY REGULATION</scope>
</reference>
<reference key="15">
    <citation type="journal article" date="1999" name="J. Mol. Biol.">
        <title>Binding specificity and mechanistic insight into glutaredoxin-catalyzed protein disulfide reduction.</title>
        <authorList>
            <person name="Berardi M.J."/>
            <person name="Bushweller J.H."/>
        </authorList>
    </citation>
    <scope>STRUCTURE BY NMR OF 737-761</scope>
    <scope>BINDING SITES</scope>
</reference>
<gene>
    <name type="primary">nrdA</name>
    <name type="synonym">dnaF</name>
    <name type="ordered locus">b2234</name>
    <name type="ordered locus">JW2228</name>
</gene>
<accession>P00452</accession>
<accession>P78088</accession>
<accession>P78177</accession>
<keyword id="KW-0002">3D-structure</keyword>
<keyword id="KW-0007">Acetylation</keyword>
<keyword id="KW-0021">Allosteric enzyme</keyword>
<keyword id="KW-0024">Alternative initiation</keyword>
<keyword id="KW-0067">ATP-binding</keyword>
<keyword id="KW-0215">Deoxyribonucleotide synthesis</keyword>
<keyword id="KW-0903">Direct protein sequencing</keyword>
<keyword id="KW-1015">Disulfide bond</keyword>
<keyword id="KW-0547">Nucleotide-binding</keyword>
<keyword id="KW-0560">Oxidoreductase</keyword>
<keyword id="KW-1185">Reference proteome</keyword>
<proteinExistence type="evidence at protein level"/>
<sequence length="761" mass="85775">MNQNLLVTKRDGSTERINLDKIHRVLDWAAEGLHNVSISQVELRSHIQFYDGIKTSDIHETIIKAAADLISRDAPDYQYLAARLAIFHLRKKAYGQFEPPALYDHVVKMVEMGKYDNHLLEDYTEEEFKQMDTFIDHDRDMTFSYAAVKQLEGKYLVQNRVTGEIYESAQFLYILVAACLFSNYPRETRLQYVKRFYDAVSTFKISLPTPIMSGVRTPTRQFSSCVLIECGDSLDSINATSSAIVKYVSQRAGIGINAGRIRALGSPIRGGEAFHTGCIPFYKHFQTAVKSCSQGGVRGGAATLFYPMWHLEVESLLVLKNNRGVEGNRVRHMDYGVQINKLMYTRLLKGEDITLFSPSDVPGLYDAFFADQEEFERLYTKYEKDDSIRKQRVKAVELFSLMMQERASTGRIYIQNVDHCNTHSPFDPAIAPVRQSNLCLEIALPTKPLNDVNDENGEIALCTLSAFNLGAINNLDELEELAILAVRALDALLDYQDYPIPAAKRGAMGRRTLGIGVINFAYYLAKHGKRYSDGSANNLTHKTFEAIQYYLLKASNELAKEQGACPWFNETTYAKGILPIDTYKKDLDTIANEPLHYDWEALRESIKTHGLRNSTLSALMPSETSSQISNATNGIEPPRGYVSIKASKDGILRQVVPDYEHLHDAYELLWEMPGNDGYLQLVGIMQKFIDQSISANTNYDPSRFPSGKVPMQQLLKDLLTAYKFGVKTLYYQNTRDGAEDAQDDLVPSIQDDGCESGACKI</sequence>